<protein>
    <recommendedName>
        <fullName>Protein MGF 360-3L</fullName>
    </recommendedName>
</protein>
<gene>
    <name type="ordered locus">Mal-016</name>
</gene>
<evidence type="ECO:0000250" key="1"/>
<evidence type="ECO:0000255" key="2"/>
<evidence type="ECO:0000305" key="3"/>
<accession>P0C9J5</accession>
<proteinExistence type="inferred from homology"/>
<keyword id="KW-0325">Glycoprotein</keyword>
<keyword id="KW-1043">Host membrane</keyword>
<keyword id="KW-0472">Membrane</keyword>
<keyword id="KW-0812">Transmembrane</keyword>
<keyword id="KW-1133">Transmembrane helix</keyword>
<organism>
    <name type="scientific">African swine fever virus (isolate Tick/Malawi/Lil 20-1/1983)</name>
    <name type="common">ASFV</name>
    <dbReference type="NCBI Taxonomy" id="10500"/>
    <lineage>
        <taxon>Viruses</taxon>
        <taxon>Varidnaviria</taxon>
        <taxon>Bamfordvirae</taxon>
        <taxon>Nucleocytoviricota</taxon>
        <taxon>Pokkesviricetes</taxon>
        <taxon>Asfuvirales</taxon>
        <taxon>Asfarviridae</taxon>
        <taxon>Asfivirus</taxon>
        <taxon>African swine fever virus</taxon>
    </lineage>
</organism>
<feature type="chain" id="PRO_0000373217" description="Protein MGF 360-3L">
    <location>
        <begin position="1"/>
        <end position="286"/>
    </location>
</feature>
<feature type="transmembrane region" description="Helical" evidence="2">
    <location>
        <begin position="1"/>
        <end position="17"/>
    </location>
</feature>
<feature type="transmembrane region" description="Helical" evidence="2">
    <location>
        <begin position="128"/>
        <end position="148"/>
    </location>
</feature>
<feature type="transmembrane region" description="Helical" evidence="2">
    <location>
        <begin position="153"/>
        <end position="173"/>
    </location>
</feature>
<feature type="glycosylation site" description="N-linked (GlcNAc...) asparagine; by host" evidence="2">
    <location>
        <position position="61"/>
    </location>
</feature>
<feature type="glycosylation site" description="N-linked (GlcNAc...) asparagine; by host" evidence="2">
    <location>
        <position position="238"/>
    </location>
</feature>
<feature type="glycosylation site" description="N-linked (GlcNAc...) asparagine; by host" evidence="2">
    <location>
        <position position="263"/>
    </location>
</feature>
<dbReference type="EMBL" id="AY261361">
    <property type="status" value="NOT_ANNOTATED_CDS"/>
    <property type="molecule type" value="Genomic_DNA"/>
</dbReference>
<dbReference type="Proteomes" id="UP000000860">
    <property type="component" value="Segment"/>
</dbReference>
<dbReference type="GO" id="GO:0033644">
    <property type="term" value="C:host cell membrane"/>
    <property type="evidence" value="ECO:0007669"/>
    <property type="project" value="UniProtKB-SubCell"/>
</dbReference>
<dbReference type="GO" id="GO:0016020">
    <property type="term" value="C:membrane"/>
    <property type="evidence" value="ECO:0007669"/>
    <property type="project" value="UniProtKB-KW"/>
</dbReference>
<dbReference type="InterPro" id="IPR004848">
    <property type="entry name" value="ASFV_fam_110"/>
</dbReference>
<dbReference type="Pfam" id="PF01639">
    <property type="entry name" value="v110"/>
    <property type="match status" value="2"/>
</dbReference>
<reference key="1">
    <citation type="submission" date="2003-03" db="EMBL/GenBank/DDBJ databases">
        <title>African swine fever virus genomes.</title>
        <authorList>
            <person name="Kutish G.F."/>
            <person name="Rock D.L."/>
        </authorList>
    </citation>
    <scope>NUCLEOTIDE SEQUENCE [LARGE SCALE GENOMIC DNA]</scope>
</reference>
<organismHost>
    <name type="scientific">Ornithodoros</name>
    <name type="common">relapsing fever ticks</name>
    <dbReference type="NCBI Taxonomy" id="6937"/>
</organismHost>
<organismHost>
    <name type="scientific">Phacochoerus aethiopicus</name>
    <name type="common">Warthog</name>
    <dbReference type="NCBI Taxonomy" id="85517"/>
</organismHost>
<organismHost>
    <name type="scientific">Phacochoerus africanus</name>
    <name type="common">Warthog</name>
    <dbReference type="NCBI Taxonomy" id="41426"/>
</organismHost>
<organismHost>
    <name type="scientific">Potamochoerus larvatus</name>
    <name type="common">Bushpig</name>
    <dbReference type="NCBI Taxonomy" id="273792"/>
</organismHost>
<organismHost>
    <name type="scientific">Sus scrofa</name>
    <name type="common">Pig</name>
    <dbReference type="NCBI Taxonomy" id="9823"/>
</organismHost>
<sequence length="286" mass="34016">MKVLLELLLGYSVLILAHELPYLPSTRHPPKEELPYWCTYVKNCDFCWDCQNDICKNKITNESISINSIVNCRVTRDSPSQSCFYEISVKMPNHHSMECSHPRPYTGNEIFMEKWGGGGDYWPIIIRHCCFYLVFSIAFVGYIVFVYNKNLHLNTTMKLLALLSILIWLSQPALNRPLSIFYMKQNLPRTYTPPVRELEYWCTYAKHCDFCWTCKDGMCKNKVFRDHPIITQNDYIVNCTVSRWHDRCMYEAHFRIHYQHNMNCSQPKDLEWFIELKRHVINQDDL</sequence>
<comment type="function">
    <text evidence="1">Plays a role in virus cell tropism, and may be required for efficient virus replication in macrophages.</text>
</comment>
<comment type="subcellular location">
    <subcellularLocation>
        <location evidence="3">Host membrane</location>
        <topology evidence="3">Multi-pass membrane protein</topology>
    </subcellularLocation>
</comment>
<comment type="similarity">
    <text evidence="3">Belongs to the asfivirus MGF 110 family.</text>
</comment>
<name>11011_ASFM2</name>